<comment type="subunit">
    <text>Part of the 30S ribosomal subunit.</text>
</comment>
<comment type="subcellular location">
    <subcellularLocation>
        <location>Plastid</location>
        <location>Chloroplast</location>
    </subcellularLocation>
</comment>
<comment type="similarity">
    <text evidence="1">Belongs to the bacterial ribosomal protein bS18 family.</text>
</comment>
<organism>
    <name type="scientific">Larix laricina</name>
    <name type="common">Tamarack</name>
    <name type="synonym">Pinus laricina</name>
    <dbReference type="NCBI Taxonomy" id="3326"/>
    <lineage>
        <taxon>Eukaryota</taxon>
        <taxon>Viridiplantae</taxon>
        <taxon>Streptophyta</taxon>
        <taxon>Embryophyta</taxon>
        <taxon>Tracheophyta</taxon>
        <taxon>Spermatophyta</taxon>
        <taxon>Pinopsida</taxon>
        <taxon>Pinidae</taxon>
        <taxon>Conifers I</taxon>
        <taxon>Pinales</taxon>
        <taxon>Pinaceae</taxon>
        <taxon>Larix</taxon>
    </lineage>
</organism>
<proteinExistence type="inferred from homology"/>
<keyword id="KW-0150">Chloroplast</keyword>
<keyword id="KW-0934">Plastid</keyword>
<keyword id="KW-0687">Ribonucleoprotein</keyword>
<keyword id="KW-0689">Ribosomal protein</keyword>
<keyword id="KW-0694">RNA-binding</keyword>
<keyword id="KW-0699">rRNA-binding</keyword>
<dbReference type="EMBL" id="AY131247">
    <property type="protein sequence ID" value="AAN18236.1"/>
    <property type="molecule type" value="Genomic_DNA"/>
</dbReference>
<dbReference type="SMR" id="Q85UZ8"/>
<dbReference type="GO" id="GO:0009507">
    <property type="term" value="C:chloroplast"/>
    <property type="evidence" value="ECO:0007669"/>
    <property type="project" value="UniProtKB-SubCell"/>
</dbReference>
<dbReference type="GO" id="GO:0005763">
    <property type="term" value="C:mitochondrial small ribosomal subunit"/>
    <property type="evidence" value="ECO:0007669"/>
    <property type="project" value="TreeGrafter"/>
</dbReference>
<dbReference type="GO" id="GO:0070181">
    <property type="term" value="F:small ribosomal subunit rRNA binding"/>
    <property type="evidence" value="ECO:0007669"/>
    <property type="project" value="TreeGrafter"/>
</dbReference>
<dbReference type="GO" id="GO:0003735">
    <property type="term" value="F:structural constituent of ribosome"/>
    <property type="evidence" value="ECO:0007669"/>
    <property type="project" value="InterPro"/>
</dbReference>
<dbReference type="GO" id="GO:0006412">
    <property type="term" value="P:translation"/>
    <property type="evidence" value="ECO:0007669"/>
    <property type="project" value="UniProtKB-UniRule"/>
</dbReference>
<dbReference type="FunFam" id="4.10.640.10:FF:000002">
    <property type="entry name" value="30S ribosomal protein S18, chloroplastic"/>
    <property type="match status" value="1"/>
</dbReference>
<dbReference type="Gene3D" id="4.10.640.10">
    <property type="entry name" value="Ribosomal protein S18"/>
    <property type="match status" value="1"/>
</dbReference>
<dbReference type="HAMAP" id="MF_00270">
    <property type="entry name" value="Ribosomal_bS18"/>
    <property type="match status" value="1"/>
</dbReference>
<dbReference type="InterPro" id="IPR001648">
    <property type="entry name" value="Ribosomal_bS18"/>
</dbReference>
<dbReference type="InterPro" id="IPR018275">
    <property type="entry name" value="Ribosomal_bS18_CS"/>
</dbReference>
<dbReference type="InterPro" id="IPR036870">
    <property type="entry name" value="Ribosomal_bS18_sf"/>
</dbReference>
<dbReference type="NCBIfam" id="TIGR00165">
    <property type="entry name" value="S18"/>
    <property type="match status" value="1"/>
</dbReference>
<dbReference type="PANTHER" id="PTHR13479">
    <property type="entry name" value="30S RIBOSOMAL PROTEIN S18"/>
    <property type="match status" value="1"/>
</dbReference>
<dbReference type="PANTHER" id="PTHR13479:SF40">
    <property type="entry name" value="SMALL RIBOSOMAL SUBUNIT PROTEIN BS18M"/>
    <property type="match status" value="1"/>
</dbReference>
<dbReference type="Pfam" id="PF01084">
    <property type="entry name" value="Ribosomal_S18"/>
    <property type="match status" value="1"/>
</dbReference>
<dbReference type="PRINTS" id="PR00974">
    <property type="entry name" value="RIBOSOMALS18"/>
</dbReference>
<dbReference type="SUPFAM" id="SSF46911">
    <property type="entry name" value="Ribosomal protein S18"/>
    <property type="match status" value="1"/>
</dbReference>
<dbReference type="PROSITE" id="PS00057">
    <property type="entry name" value="RIBOSOMAL_S18"/>
    <property type="match status" value="1"/>
</dbReference>
<reference key="1">
    <citation type="journal article" date="2003" name="Mol. Phylogenet. Evol.">
        <title>Conflicting phylogenies of Larix (Pinaceae) based on cytoplasmic and nuclear DNA.</title>
        <authorList>
            <person name="Semerikov V.L."/>
            <person name="Zhang H."/>
            <person name="Sun M."/>
            <person name="Lascoux M."/>
        </authorList>
    </citation>
    <scope>NUCLEOTIDE SEQUENCE [GENOMIC DNA]</scope>
</reference>
<sequence>MKQTMDKPKRSFRRHLTPIRRHLSPIGSGDRIDYKNMSLISRFISEQGKILSGRVNRLTSKQQRLMTNAIKRARILSLLPFLYNEN</sequence>
<geneLocation type="chloroplast"/>
<feature type="chain" id="PRO_0000111289" description="Small ribosomal subunit protein bS18c">
    <location>
        <begin position="1"/>
        <end position="86"/>
    </location>
</feature>
<protein>
    <recommendedName>
        <fullName evidence="1">Small ribosomal subunit protein bS18c</fullName>
    </recommendedName>
    <alternativeName>
        <fullName evidence="2">30S ribosomal protein S18, chloroplastic</fullName>
    </alternativeName>
</protein>
<evidence type="ECO:0000255" key="1">
    <source>
        <dbReference type="HAMAP-Rule" id="MF_00270"/>
    </source>
</evidence>
<evidence type="ECO:0000305" key="2"/>
<accession>Q85UZ8</accession>
<name>RR18_LARLA</name>
<gene>
    <name evidence="1" type="primary">rps18</name>
</gene>